<evidence type="ECO:0000255" key="1">
    <source>
        <dbReference type="HAMAP-Rule" id="MF_00268"/>
    </source>
</evidence>
<evidence type="ECO:0000256" key="2">
    <source>
        <dbReference type="SAM" id="MobiDB-lite"/>
    </source>
</evidence>
<feature type="chain" id="PRO_1000047961" description="Protein RecA">
    <location>
        <begin position="1"/>
        <end position="379"/>
    </location>
</feature>
<feature type="region of interest" description="Disordered" evidence="2">
    <location>
        <begin position="1"/>
        <end position="24"/>
    </location>
</feature>
<feature type="compositionally biased region" description="Polar residues" evidence="2">
    <location>
        <begin position="7"/>
        <end position="16"/>
    </location>
</feature>
<feature type="binding site" evidence="1">
    <location>
        <begin position="84"/>
        <end position="91"/>
    </location>
    <ligand>
        <name>ATP</name>
        <dbReference type="ChEBI" id="CHEBI:30616"/>
    </ligand>
</feature>
<keyword id="KW-0067">ATP-binding</keyword>
<keyword id="KW-0963">Cytoplasm</keyword>
<keyword id="KW-0227">DNA damage</keyword>
<keyword id="KW-0233">DNA recombination</keyword>
<keyword id="KW-0234">DNA repair</keyword>
<keyword id="KW-0238">DNA-binding</keyword>
<keyword id="KW-0547">Nucleotide-binding</keyword>
<keyword id="KW-0742">SOS response</keyword>
<comment type="function">
    <text evidence="1">Can catalyze the hydrolysis of ATP in the presence of single-stranded DNA, the ATP-dependent uptake of single-stranded DNA by duplex DNA, and the ATP-dependent hybridization of homologous single-stranded DNAs. It interacts with LexA causing its activation and leading to its autocatalytic cleavage.</text>
</comment>
<comment type="subcellular location">
    <subcellularLocation>
        <location evidence="1">Cytoplasm</location>
    </subcellularLocation>
</comment>
<comment type="similarity">
    <text evidence="1">Belongs to the RecA family.</text>
</comment>
<proteinExistence type="inferred from homology"/>
<reference key="1">
    <citation type="journal article" date="2007" name="PLoS Genet.">
        <title>Patterns and implications of gene gain and loss in the evolution of Prochlorococcus.</title>
        <authorList>
            <person name="Kettler G.C."/>
            <person name="Martiny A.C."/>
            <person name="Huang K."/>
            <person name="Zucker J."/>
            <person name="Coleman M.L."/>
            <person name="Rodrigue S."/>
            <person name="Chen F."/>
            <person name="Lapidus A."/>
            <person name="Ferriera S."/>
            <person name="Johnson J."/>
            <person name="Steglich C."/>
            <person name="Church G.M."/>
            <person name="Richardson P."/>
            <person name="Chisholm S.W."/>
        </authorList>
    </citation>
    <scope>NUCLEOTIDE SEQUENCE [LARGE SCALE GENOMIC DNA]</scope>
    <source>
        <strain>MIT 9303</strain>
    </source>
</reference>
<dbReference type="EMBL" id="CP000554">
    <property type="protein sequence ID" value="ABM79032.1"/>
    <property type="molecule type" value="Genomic_DNA"/>
</dbReference>
<dbReference type="RefSeq" id="WP_011826900.1">
    <property type="nucleotide sequence ID" value="NC_008820.1"/>
</dbReference>
<dbReference type="SMR" id="A2CC22"/>
<dbReference type="STRING" id="59922.P9303_22971"/>
<dbReference type="KEGG" id="pmf:P9303_22971"/>
<dbReference type="HOGENOM" id="CLU_040469_3_2_3"/>
<dbReference type="BioCyc" id="PMAR59922:G1G80-2013-MONOMER"/>
<dbReference type="Proteomes" id="UP000002274">
    <property type="component" value="Chromosome"/>
</dbReference>
<dbReference type="GO" id="GO:0005829">
    <property type="term" value="C:cytosol"/>
    <property type="evidence" value="ECO:0007669"/>
    <property type="project" value="TreeGrafter"/>
</dbReference>
<dbReference type="GO" id="GO:0005524">
    <property type="term" value="F:ATP binding"/>
    <property type="evidence" value="ECO:0007669"/>
    <property type="project" value="UniProtKB-UniRule"/>
</dbReference>
<dbReference type="GO" id="GO:0016887">
    <property type="term" value="F:ATP hydrolysis activity"/>
    <property type="evidence" value="ECO:0007669"/>
    <property type="project" value="InterPro"/>
</dbReference>
<dbReference type="GO" id="GO:0140664">
    <property type="term" value="F:ATP-dependent DNA damage sensor activity"/>
    <property type="evidence" value="ECO:0007669"/>
    <property type="project" value="InterPro"/>
</dbReference>
<dbReference type="GO" id="GO:0003684">
    <property type="term" value="F:damaged DNA binding"/>
    <property type="evidence" value="ECO:0007669"/>
    <property type="project" value="UniProtKB-UniRule"/>
</dbReference>
<dbReference type="GO" id="GO:0003697">
    <property type="term" value="F:single-stranded DNA binding"/>
    <property type="evidence" value="ECO:0007669"/>
    <property type="project" value="UniProtKB-UniRule"/>
</dbReference>
<dbReference type="GO" id="GO:0006310">
    <property type="term" value="P:DNA recombination"/>
    <property type="evidence" value="ECO:0007669"/>
    <property type="project" value="UniProtKB-UniRule"/>
</dbReference>
<dbReference type="GO" id="GO:0006281">
    <property type="term" value="P:DNA repair"/>
    <property type="evidence" value="ECO:0007669"/>
    <property type="project" value="UniProtKB-UniRule"/>
</dbReference>
<dbReference type="GO" id="GO:0009432">
    <property type="term" value="P:SOS response"/>
    <property type="evidence" value="ECO:0007669"/>
    <property type="project" value="UniProtKB-UniRule"/>
</dbReference>
<dbReference type="CDD" id="cd00983">
    <property type="entry name" value="RecA"/>
    <property type="match status" value="1"/>
</dbReference>
<dbReference type="FunFam" id="3.40.50.300:FF:000087">
    <property type="entry name" value="Recombinase RecA"/>
    <property type="match status" value="1"/>
</dbReference>
<dbReference type="Gene3D" id="3.40.50.300">
    <property type="entry name" value="P-loop containing nucleotide triphosphate hydrolases"/>
    <property type="match status" value="1"/>
</dbReference>
<dbReference type="HAMAP" id="MF_00268">
    <property type="entry name" value="RecA"/>
    <property type="match status" value="1"/>
</dbReference>
<dbReference type="InterPro" id="IPR003593">
    <property type="entry name" value="AAA+_ATPase"/>
</dbReference>
<dbReference type="InterPro" id="IPR013765">
    <property type="entry name" value="DNA_recomb/repair_RecA"/>
</dbReference>
<dbReference type="InterPro" id="IPR020584">
    <property type="entry name" value="DNA_recomb/repair_RecA_CS"/>
</dbReference>
<dbReference type="InterPro" id="IPR027417">
    <property type="entry name" value="P-loop_NTPase"/>
</dbReference>
<dbReference type="InterPro" id="IPR049261">
    <property type="entry name" value="RecA-like_C"/>
</dbReference>
<dbReference type="InterPro" id="IPR049428">
    <property type="entry name" value="RecA-like_N"/>
</dbReference>
<dbReference type="InterPro" id="IPR020588">
    <property type="entry name" value="RecA_ATP-bd"/>
</dbReference>
<dbReference type="InterPro" id="IPR023400">
    <property type="entry name" value="RecA_C_sf"/>
</dbReference>
<dbReference type="InterPro" id="IPR020587">
    <property type="entry name" value="RecA_monomer-monomer_interface"/>
</dbReference>
<dbReference type="NCBIfam" id="TIGR02012">
    <property type="entry name" value="tigrfam_recA"/>
    <property type="match status" value="1"/>
</dbReference>
<dbReference type="PANTHER" id="PTHR45900:SF1">
    <property type="entry name" value="MITOCHONDRIAL DNA REPAIR PROTEIN RECA HOMOLOG-RELATED"/>
    <property type="match status" value="1"/>
</dbReference>
<dbReference type="PANTHER" id="PTHR45900">
    <property type="entry name" value="RECA"/>
    <property type="match status" value="1"/>
</dbReference>
<dbReference type="Pfam" id="PF00154">
    <property type="entry name" value="RecA"/>
    <property type="match status" value="1"/>
</dbReference>
<dbReference type="Pfam" id="PF21096">
    <property type="entry name" value="RecA_C"/>
    <property type="match status" value="1"/>
</dbReference>
<dbReference type="PRINTS" id="PR00142">
    <property type="entry name" value="RECA"/>
</dbReference>
<dbReference type="SMART" id="SM00382">
    <property type="entry name" value="AAA"/>
    <property type="match status" value="1"/>
</dbReference>
<dbReference type="SUPFAM" id="SSF52540">
    <property type="entry name" value="P-loop containing nucleoside triphosphate hydrolases"/>
    <property type="match status" value="1"/>
</dbReference>
<dbReference type="SUPFAM" id="SSF54752">
    <property type="entry name" value="RecA protein, C-terminal domain"/>
    <property type="match status" value="1"/>
</dbReference>
<dbReference type="PROSITE" id="PS00321">
    <property type="entry name" value="RECA_1"/>
    <property type="match status" value="1"/>
</dbReference>
<dbReference type="PROSITE" id="PS50162">
    <property type="entry name" value="RECA_2"/>
    <property type="match status" value="1"/>
</dbReference>
<dbReference type="PROSITE" id="PS50163">
    <property type="entry name" value="RECA_3"/>
    <property type="match status" value="1"/>
</dbReference>
<protein>
    <recommendedName>
        <fullName evidence="1">Protein RecA</fullName>
    </recommendedName>
    <alternativeName>
        <fullName evidence="1">Recombinase A</fullName>
    </alternativeName>
</protein>
<gene>
    <name evidence="1" type="primary">recA</name>
    <name type="ordered locus">P9303_22971</name>
</gene>
<sequence>MSVDVKSAQSSKSDSLQAEPRPGERDKALNLVLGQIERNFGKGSIMRLGDASRMRVETFPTGALTLDLALGGGYPKGRVVEVYGPESSGKTTLTLHAIAEVQRRGGVAAFVDAEHALDPVYAASLGVDIENLLVSQPDTGEMALEIVDQLVRSAAVDIVVVDSVAALTPRSEIEGEMGDLAVGSQARLMSQAMRKITGNIGKSGCTVIFLNQLRLKIGVTYGNPETTTGGNALKFYASVRLDIRRIQTLKRGTEEYGIRAKVKVAKNKVAPPFRIAEFDILFGRGISTLGCLLDLAEETGVVIRKGAWYSYEGDNIGQGRDNTITWLEQNSEAQEQIEVLVRQKLTEGSEVTANSMRPLAAAARTAAKKPAVSLASEAA</sequence>
<name>RECA_PROM3</name>
<accession>A2CC22</accession>
<organism>
    <name type="scientific">Prochlorococcus marinus (strain MIT 9303)</name>
    <dbReference type="NCBI Taxonomy" id="59922"/>
    <lineage>
        <taxon>Bacteria</taxon>
        <taxon>Bacillati</taxon>
        <taxon>Cyanobacteriota</taxon>
        <taxon>Cyanophyceae</taxon>
        <taxon>Synechococcales</taxon>
        <taxon>Prochlorococcaceae</taxon>
        <taxon>Prochlorococcus</taxon>
    </lineage>
</organism>